<sequence length="517" mass="58222">MVIANNPILKGFYPDPSICRKGDDFYLVCSSFVYAPGVPIFHTKDLAHFEQIGNILDRESQLPLSGDISRGIFAPTIREHNGIFYMITTNVSSGGNFIVTAKDPAGPWSEPYYLGEDEAPGIDPSLFFDDDGKCYYVGTRPNPDGVRYNGDWEIWVQELDLEQMKLVGPSMAIWKGALKDVIWPEGPHLYKKDGYYYLLHAEAGTSFEHAISVARSKELFKWFEGCPRNPIFTHRNLGKDYPVCNVGHADLVDDINGNWYMVMLASRPCKGKCSLGRETFLAKVIWEDGWPVVNPGVGRLTDEVEMDLPEYRFSKEITTKDKMTFEETVLDDRFVGIERRSEDFYSLTDNPGFLRLKLRPEAIENTGNPSYLGIRQKTHSFRASCGLKFTPAKDNECAGMVLFQNNENHLELLVVKKKDKLQFKVGPVIKGTKIRLATFDISSGDLEIILEAANQLANIYIKKNNEKILVAECIDLSPYTTEESGGFVGCTIGLYASSNGKTSDNYCDYSYFTVEEV</sequence>
<evidence type="ECO:0000250" key="1">
    <source>
        <dbReference type="UniProtKB" id="A7LXU0"/>
    </source>
</evidence>
<evidence type="ECO:0000305" key="2"/>
<comment type="function">
    <text>Has a 1.6-fold higher activity as an arabinosidase than as a beta-xylosidase when tested on the substrates nitrophenyl-beta-D-xylopyranoside and P-nitrophenyl-alpha-L-arabinofuranoside.</text>
</comment>
<comment type="catalytic activity">
    <reaction>
        <text>Hydrolysis of (1-&gt;4)-beta-D-xylans, to remove successive D-xylose residues from the non-reducing termini.</text>
        <dbReference type="EC" id="3.2.1.37"/>
    </reaction>
</comment>
<comment type="catalytic activity">
    <reaction>
        <text>Hydrolysis of terminal non-reducing alpha-L-arabinofuranoside residues in alpha-L-arabinosides.</text>
        <dbReference type="EC" id="3.2.1.55"/>
    </reaction>
</comment>
<comment type="similarity">
    <text evidence="2">Belongs to the glycosyl hydrolase 43 family.</text>
</comment>
<name>XYLB_BUTFI</name>
<gene>
    <name type="primary">xylB</name>
</gene>
<reference key="1">
    <citation type="journal article" date="1991" name="Appl. Environ. Microbiol.">
        <title>Sequencing and expression of the Butyrivibrio fibrisolvens xylB gene encoding a novel bifunctional protein with beta-D-xylosidase and alpha-L-arabinofuranosidase activities.</title>
        <authorList>
            <person name="Utt E.A."/>
            <person name="Eddy C.K."/>
            <person name="Keshav K.F."/>
            <person name="Ingram L.O."/>
        </authorList>
    </citation>
    <scope>NUCLEOTIDE SEQUENCE [GENOMIC DNA]</scope>
</reference>
<accession>P45982</accession>
<feature type="chain" id="PRO_0000057694" description="Xylosidase/arabinosidase">
    <location>
        <begin position="1"/>
        <end position="517"/>
    </location>
</feature>
<feature type="active site" description="Proton acceptor" evidence="1">
    <location>
        <position position="15"/>
    </location>
</feature>
<feature type="active site" description="Proton donor" evidence="1">
    <location>
        <position position="185"/>
    </location>
</feature>
<feature type="site" description="Important for catalytic activity, responsible for pKa modulation of the active site Glu and correct orientation of both the proton donor and substrate" evidence="1">
    <location>
        <position position="123"/>
    </location>
</feature>
<dbReference type="EC" id="3.2.1.37"/>
<dbReference type="EC" id="3.2.1.55"/>
<dbReference type="EMBL" id="M55537">
    <property type="protein sequence ID" value="AAA63610.1"/>
    <property type="molecule type" value="Genomic_DNA"/>
</dbReference>
<dbReference type="PIR" id="A49776">
    <property type="entry name" value="A49776"/>
</dbReference>
<dbReference type="SMR" id="P45982"/>
<dbReference type="CAZy" id="GH43">
    <property type="family name" value="Glycoside Hydrolase Family 43"/>
</dbReference>
<dbReference type="GO" id="GO:0046556">
    <property type="term" value="F:alpha-L-arabinofuranosidase activity"/>
    <property type="evidence" value="ECO:0007669"/>
    <property type="project" value="UniProtKB-EC"/>
</dbReference>
<dbReference type="GO" id="GO:0009044">
    <property type="term" value="F:xylan 1,4-beta-xylosidase activity"/>
    <property type="evidence" value="ECO:0007669"/>
    <property type="project" value="UniProtKB-EC"/>
</dbReference>
<dbReference type="GO" id="GO:0045493">
    <property type="term" value="P:xylan catabolic process"/>
    <property type="evidence" value="ECO:0007669"/>
    <property type="project" value="UniProtKB-KW"/>
</dbReference>
<dbReference type="CDD" id="cd18617">
    <property type="entry name" value="GH43_XynB-like"/>
    <property type="match status" value="1"/>
</dbReference>
<dbReference type="Gene3D" id="2.60.120.200">
    <property type="match status" value="1"/>
</dbReference>
<dbReference type="Gene3D" id="2.115.10.20">
    <property type="entry name" value="Glycosyl hydrolase domain, family 43"/>
    <property type="match status" value="1"/>
</dbReference>
<dbReference type="InterPro" id="IPR013320">
    <property type="entry name" value="ConA-like_dom_sf"/>
</dbReference>
<dbReference type="InterPro" id="IPR041542">
    <property type="entry name" value="GH43_C2"/>
</dbReference>
<dbReference type="InterPro" id="IPR006710">
    <property type="entry name" value="Glyco_hydro_43"/>
</dbReference>
<dbReference type="InterPro" id="IPR023296">
    <property type="entry name" value="Glyco_hydro_beta-prop_sf"/>
</dbReference>
<dbReference type="InterPro" id="IPR051795">
    <property type="entry name" value="Glycosyl_Hydrlase_43"/>
</dbReference>
<dbReference type="PANTHER" id="PTHR42812">
    <property type="entry name" value="BETA-XYLOSIDASE"/>
    <property type="match status" value="1"/>
</dbReference>
<dbReference type="PANTHER" id="PTHR42812:SF12">
    <property type="entry name" value="BETA-XYLOSIDASE-RELATED"/>
    <property type="match status" value="1"/>
</dbReference>
<dbReference type="Pfam" id="PF17851">
    <property type="entry name" value="GH43_C2"/>
    <property type="match status" value="1"/>
</dbReference>
<dbReference type="Pfam" id="PF04616">
    <property type="entry name" value="Glyco_hydro_43"/>
    <property type="match status" value="1"/>
</dbReference>
<dbReference type="SUPFAM" id="SSF75005">
    <property type="entry name" value="Arabinanase/levansucrase/invertase"/>
    <property type="match status" value="1"/>
</dbReference>
<dbReference type="SUPFAM" id="SSF49899">
    <property type="entry name" value="Concanavalin A-like lectins/glucanases"/>
    <property type="match status" value="1"/>
</dbReference>
<organism>
    <name type="scientific">Butyrivibrio fibrisolvens</name>
    <dbReference type="NCBI Taxonomy" id="831"/>
    <lineage>
        <taxon>Bacteria</taxon>
        <taxon>Bacillati</taxon>
        <taxon>Bacillota</taxon>
        <taxon>Clostridia</taxon>
        <taxon>Lachnospirales</taxon>
        <taxon>Lachnospiraceae</taxon>
        <taxon>Butyrivibrio</taxon>
    </lineage>
</organism>
<proteinExistence type="inferred from homology"/>
<protein>
    <recommendedName>
        <fullName>Xylosidase/arabinosidase</fullName>
    </recommendedName>
    <domain>
        <recommendedName>
            <fullName>Beta-xylosidase</fullName>
            <ecNumber>3.2.1.37</ecNumber>
        </recommendedName>
        <alternativeName>
            <fullName>1,4-beta-D-xylan xylohydrolase</fullName>
        </alternativeName>
        <alternativeName>
            <fullName>Xylan 1,4-beta-xylosidase</fullName>
        </alternativeName>
    </domain>
    <domain>
        <recommendedName>
            <fullName>Alpha-L-arabinofuranosidase</fullName>
            <shortName>Arabinosidase</shortName>
            <ecNumber>3.2.1.55</ecNumber>
        </recommendedName>
    </domain>
</protein>
<keyword id="KW-0119">Carbohydrate metabolism</keyword>
<keyword id="KW-0326">Glycosidase</keyword>
<keyword id="KW-0378">Hydrolase</keyword>
<keyword id="KW-0511">Multifunctional enzyme</keyword>
<keyword id="KW-0624">Polysaccharide degradation</keyword>
<keyword id="KW-0858">Xylan degradation</keyword>